<sequence>MGSSFFGRPKMGGSSSSSPTSSSSSPAKRGKNKNGSDKPKQPQRGLGVAQLEKIRLHGEYNCNSFNTYPSYHPSTYQEDVRIQGGYPSIPSSSPSFSYASSSPPPAPYGFHPNMMMNANNDQYERTTIRYGDSQPHRAPSWNPSYGILESQHFVEPNTTRHFLHEDQRNISLGSGIQNFETSEANELDLELRL</sequence>
<evidence type="ECO:0000256" key="1">
    <source>
        <dbReference type="SAM" id="MobiDB-lite"/>
    </source>
</evidence>
<evidence type="ECO:0000269" key="2">
    <source>
    </source>
</evidence>
<evidence type="ECO:0000269" key="3">
    <source>
    </source>
</evidence>
<evidence type="ECO:0000303" key="4">
    <source>
    </source>
</evidence>
<evidence type="ECO:0000303" key="5">
    <source>
    </source>
</evidence>
<evidence type="ECO:0000305" key="6"/>
<evidence type="ECO:0000312" key="7">
    <source>
        <dbReference type="Araport" id="AT4G28840"/>
    </source>
</evidence>
<evidence type="ECO:0000312" key="8">
    <source>
        <dbReference type="EMBL" id="AAT41746.1"/>
    </source>
</evidence>
<evidence type="ECO:0000312" key="9">
    <source>
        <dbReference type="EMBL" id="CAA22968.1"/>
    </source>
</evidence>
<feature type="chain" id="PRO_0000435868" description="Protein SPEAR3">
    <location>
        <begin position="1"/>
        <end position="193"/>
    </location>
</feature>
<feature type="region of interest" description="Disordered" evidence="1">
    <location>
        <begin position="1"/>
        <end position="50"/>
    </location>
</feature>
<feature type="region of interest" description="Disordered" evidence="1">
    <location>
        <begin position="85"/>
        <end position="104"/>
    </location>
</feature>
<feature type="short sequence motif" description="SPL" evidence="6">
    <location>
        <begin position="44"/>
        <end position="52"/>
    </location>
</feature>
<feature type="short sequence motif" description="EAR" evidence="6">
    <location>
        <begin position="187"/>
        <end position="193"/>
    </location>
</feature>
<feature type="compositionally biased region" description="Low complexity" evidence="1">
    <location>
        <begin position="14"/>
        <end position="26"/>
    </location>
</feature>
<feature type="compositionally biased region" description="Low complexity" evidence="1">
    <location>
        <begin position="86"/>
        <end position="101"/>
    </location>
</feature>
<feature type="mutagenesis site" description="Loss of repression activities; when associated with S-191 and Ser-193." evidence="2">
    <original>L</original>
    <variation>S</variation>
    <location>
        <position position="189"/>
    </location>
</feature>
<feature type="mutagenesis site" description="Loss of repression activities; when associated with S-189 and Ser-193." evidence="2">
    <original>L</original>
    <variation>S</variation>
    <location>
        <position position="191"/>
    </location>
</feature>
<feature type="mutagenesis site" description="Loss of repression activities; when associated with S-189 and Ser-191." evidence="2">
    <original>L</original>
    <variation>S</variation>
    <location>
        <position position="193"/>
    </location>
</feature>
<name>SPER3_ARATH</name>
<accession>Q6IDB0</accession>
<accession>Q9SVV1</accession>
<organism evidence="8">
    <name type="scientific">Arabidopsis thaliana</name>
    <name type="common">Mouse-ear cress</name>
    <dbReference type="NCBI Taxonomy" id="3702"/>
    <lineage>
        <taxon>Eukaryota</taxon>
        <taxon>Viridiplantae</taxon>
        <taxon>Streptophyta</taxon>
        <taxon>Embryophyta</taxon>
        <taxon>Tracheophyta</taxon>
        <taxon>Spermatophyta</taxon>
        <taxon>Magnoliopsida</taxon>
        <taxon>eudicotyledons</taxon>
        <taxon>Gunneridae</taxon>
        <taxon>Pentapetalae</taxon>
        <taxon>rosids</taxon>
        <taxon>malvids</taxon>
        <taxon>Brassicales</taxon>
        <taxon>Brassicaceae</taxon>
        <taxon>Camelineae</taxon>
        <taxon>Arabidopsis</taxon>
    </lineage>
</organism>
<dbReference type="EMBL" id="AL035353">
    <property type="protein sequence ID" value="CAA22968.1"/>
    <property type="status" value="ALT_SEQ"/>
    <property type="molecule type" value="Genomic_DNA"/>
</dbReference>
<dbReference type="EMBL" id="AL161573">
    <property type="protein sequence ID" value="CAB81472.1"/>
    <property type="status" value="ALT_SEQ"/>
    <property type="molecule type" value="Genomic_DNA"/>
</dbReference>
<dbReference type="EMBL" id="CP002687">
    <property type="protein sequence ID" value="AEE85553.1"/>
    <property type="molecule type" value="Genomic_DNA"/>
</dbReference>
<dbReference type="EMBL" id="BT014763">
    <property type="protein sequence ID" value="AAT41746.1"/>
    <property type="molecule type" value="mRNA"/>
</dbReference>
<dbReference type="EMBL" id="BT015002">
    <property type="protein sequence ID" value="AAT70453.1"/>
    <property type="molecule type" value="mRNA"/>
</dbReference>
<dbReference type="PIR" id="T04515">
    <property type="entry name" value="T04515"/>
</dbReference>
<dbReference type="RefSeq" id="NP_194613.4">
    <property type="nucleotide sequence ID" value="NM_119028.5"/>
</dbReference>
<dbReference type="FunCoup" id="Q6IDB0">
    <property type="interactions" value="141"/>
</dbReference>
<dbReference type="STRING" id="3702.Q6IDB0"/>
<dbReference type="iPTMnet" id="Q6IDB0"/>
<dbReference type="PaxDb" id="3702-AT4G28840.1"/>
<dbReference type="ProteomicsDB" id="232569"/>
<dbReference type="EnsemblPlants" id="AT4G28840.1">
    <property type="protein sequence ID" value="AT4G28840.1"/>
    <property type="gene ID" value="AT4G28840"/>
</dbReference>
<dbReference type="GeneID" id="829005"/>
<dbReference type="Gramene" id="AT4G28840.1">
    <property type="protein sequence ID" value="AT4G28840.1"/>
    <property type="gene ID" value="AT4G28840"/>
</dbReference>
<dbReference type="KEGG" id="ath:AT4G28840"/>
<dbReference type="Araport" id="AT4G28840"/>
<dbReference type="TAIR" id="AT4G28840">
    <property type="gene designation" value="TIE1"/>
</dbReference>
<dbReference type="eggNOG" id="ENOG502RXQS">
    <property type="taxonomic scope" value="Eukaryota"/>
</dbReference>
<dbReference type="HOGENOM" id="CLU_094368_0_0_1"/>
<dbReference type="InParanoid" id="Q6IDB0"/>
<dbReference type="OMA" id="RMQGGYP"/>
<dbReference type="PhylomeDB" id="Q6IDB0"/>
<dbReference type="PRO" id="PR:Q6IDB0"/>
<dbReference type="Proteomes" id="UP000006548">
    <property type="component" value="Chromosome 4"/>
</dbReference>
<dbReference type="ExpressionAtlas" id="Q6IDB0">
    <property type="expression patterns" value="baseline and differential"/>
</dbReference>
<dbReference type="GO" id="GO:0005634">
    <property type="term" value="C:nucleus"/>
    <property type="evidence" value="ECO:0000314"/>
    <property type="project" value="TAIR"/>
</dbReference>
<dbReference type="GO" id="GO:0003700">
    <property type="term" value="F:DNA-binding transcription factor activity"/>
    <property type="evidence" value="ECO:0007669"/>
    <property type="project" value="InterPro"/>
</dbReference>
<dbReference type="GO" id="GO:0048366">
    <property type="term" value="P:leaf development"/>
    <property type="evidence" value="ECO:0000315"/>
    <property type="project" value="TAIR"/>
</dbReference>
<dbReference type="GO" id="GO:0045892">
    <property type="term" value="P:negative regulation of DNA-templated transcription"/>
    <property type="evidence" value="ECO:0000314"/>
    <property type="project" value="TAIR"/>
</dbReference>
<dbReference type="InterPro" id="IPR040356">
    <property type="entry name" value="SPEAR"/>
</dbReference>
<dbReference type="PANTHER" id="PTHR33388">
    <property type="entry name" value="OS01G0212500 PROTEIN"/>
    <property type="match status" value="1"/>
</dbReference>
<dbReference type="PANTHER" id="PTHR33388:SF12">
    <property type="entry name" value="PROTEIN SPEAR3"/>
    <property type="match status" value="1"/>
</dbReference>
<gene>
    <name evidence="5" type="primary">SPEAR3</name>
    <name evidence="4" type="synonym">TIE1</name>
    <name evidence="7" type="ordered locus">At4g28840</name>
    <name evidence="9" type="ORF">F16A16.50</name>
</gene>
<keyword id="KW-0539">Nucleus</keyword>
<keyword id="KW-1185">Reference proteome</keyword>
<keyword id="KW-0678">Repressor</keyword>
<keyword id="KW-0804">Transcription</keyword>
<keyword id="KW-0805">Transcription regulation</keyword>
<proteinExistence type="evidence at protein level"/>
<reference key="1">
    <citation type="journal article" date="1999" name="Nature">
        <title>Sequence and analysis of chromosome 4 of the plant Arabidopsis thaliana.</title>
        <authorList>
            <person name="Mayer K.F.X."/>
            <person name="Schueller C."/>
            <person name="Wambutt R."/>
            <person name="Murphy G."/>
            <person name="Volckaert G."/>
            <person name="Pohl T."/>
            <person name="Duesterhoeft A."/>
            <person name="Stiekema W."/>
            <person name="Entian K.-D."/>
            <person name="Terryn N."/>
            <person name="Harris B."/>
            <person name="Ansorge W."/>
            <person name="Brandt P."/>
            <person name="Grivell L.A."/>
            <person name="Rieger M."/>
            <person name="Weichselgartner M."/>
            <person name="de Simone V."/>
            <person name="Obermaier B."/>
            <person name="Mache R."/>
            <person name="Mueller M."/>
            <person name="Kreis M."/>
            <person name="Delseny M."/>
            <person name="Puigdomenech P."/>
            <person name="Watson M."/>
            <person name="Schmidtheini T."/>
            <person name="Reichert B."/>
            <person name="Portetelle D."/>
            <person name="Perez-Alonso M."/>
            <person name="Boutry M."/>
            <person name="Bancroft I."/>
            <person name="Vos P."/>
            <person name="Hoheisel J."/>
            <person name="Zimmermann W."/>
            <person name="Wedler H."/>
            <person name="Ridley P."/>
            <person name="Langham S.-A."/>
            <person name="McCullagh B."/>
            <person name="Bilham L."/>
            <person name="Robben J."/>
            <person name="van der Schueren J."/>
            <person name="Grymonprez B."/>
            <person name="Chuang Y.-J."/>
            <person name="Vandenbussche F."/>
            <person name="Braeken M."/>
            <person name="Weltjens I."/>
            <person name="Voet M."/>
            <person name="Bastiaens I."/>
            <person name="Aert R."/>
            <person name="Defoor E."/>
            <person name="Weitzenegger T."/>
            <person name="Bothe G."/>
            <person name="Ramsperger U."/>
            <person name="Hilbert H."/>
            <person name="Braun M."/>
            <person name="Holzer E."/>
            <person name="Brandt A."/>
            <person name="Peters S."/>
            <person name="van Staveren M."/>
            <person name="Dirkse W."/>
            <person name="Mooijman P."/>
            <person name="Klein Lankhorst R."/>
            <person name="Rose M."/>
            <person name="Hauf J."/>
            <person name="Koetter P."/>
            <person name="Berneiser S."/>
            <person name="Hempel S."/>
            <person name="Feldpausch M."/>
            <person name="Lamberth S."/>
            <person name="Van den Daele H."/>
            <person name="De Keyser A."/>
            <person name="Buysshaert C."/>
            <person name="Gielen J."/>
            <person name="Villarroel R."/>
            <person name="De Clercq R."/>
            <person name="van Montagu M."/>
            <person name="Rogers J."/>
            <person name="Cronin A."/>
            <person name="Quail M.A."/>
            <person name="Bray-Allen S."/>
            <person name="Clark L."/>
            <person name="Doggett J."/>
            <person name="Hall S."/>
            <person name="Kay M."/>
            <person name="Lennard N."/>
            <person name="McLay K."/>
            <person name="Mayes R."/>
            <person name="Pettett A."/>
            <person name="Rajandream M.A."/>
            <person name="Lyne M."/>
            <person name="Benes V."/>
            <person name="Rechmann S."/>
            <person name="Borkova D."/>
            <person name="Bloecker H."/>
            <person name="Scharfe M."/>
            <person name="Grimm M."/>
            <person name="Loehnert T.-H."/>
            <person name="Dose S."/>
            <person name="de Haan M."/>
            <person name="Maarse A.C."/>
            <person name="Schaefer M."/>
            <person name="Mueller-Auer S."/>
            <person name="Gabel C."/>
            <person name="Fuchs M."/>
            <person name="Fartmann B."/>
            <person name="Granderath K."/>
            <person name="Dauner D."/>
            <person name="Herzl A."/>
            <person name="Neumann S."/>
            <person name="Argiriou A."/>
            <person name="Vitale D."/>
            <person name="Liguori R."/>
            <person name="Piravandi E."/>
            <person name="Massenet O."/>
            <person name="Quigley F."/>
            <person name="Clabauld G."/>
            <person name="Muendlein A."/>
            <person name="Felber R."/>
            <person name="Schnabl S."/>
            <person name="Hiller R."/>
            <person name="Schmidt W."/>
            <person name="Lecharny A."/>
            <person name="Aubourg S."/>
            <person name="Chefdor F."/>
            <person name="Cooke R."/>
            <person name="Berger C."/>
            <person name="Monfort A."/>
            <person name="Casacuberta E."/>
            <person name="Gibbons T."/>
            <person name="Weber N."/>
            <person name="Vandenbol M."/>
            <person name="Bargues M."/>
            <person name="Terol J."/>
            <person name="Torres A."/>
            <person name="Perez-Perez A."/>
            <person name="Purnelle B."/>
            <person name="Bent E."/>
            <person name="Johnson S."/>
            <person name="Tacon D."/>
            <person name="Jesse T."/>
            <person name="Heijnen L."/>
            <person name="Schwarz S."/>
            <person name="Scholler P."/>
            <person name="Heber S."/>
            <person name="Francs P."/>
            <person name="Bielke C."/>
            <person name="Frishman D."/>
            <person name="Haase D."/>
            <person name="Lemcke K."/>
            <person name="Mewes H.-W."/>
            <person name="Stocker S."/>
            <person name="Zaccaria P."/>
            <person name="Bevan M."/>
            <person name="Wilson R.K."/>
            <person name="de la Bastide M."/>
            <person name="Habermann K."/>
            <person name="Parnell L."/>
            <person name="Dedhia N."/>
            <person name="Gnoj L."/>
            <person name="Schutz K."/>
            <person name="Huang E."/>
            <person name="Spiegel L."/>
            <person name="Sekhon M."/>
            <person name="Murray J."/>
            <person name="Sheet P."/>
            <person name="Cordes M."/>
            <person name="Abu-Threideh J."/>
            <person name="Stoneking T."/>
            <person name="Kalicki J."/>
            <person name="Graves T."/>
            <person name="Harmon G."/>
            <person name="Edwards J."/>
            <person name="Latreille P."/>
            <person name="Courtney L."/>
            <person name="Cloud J."/>
            <person name="Abbott A."/>
            <person name="Scott K."/>
            <person name="Johnson D."/>
            <person name="Minx P."/>
            <person name="Bentley D."/>
            <person name="Fulton B."/>
            <person name="Miller N."/>
            <person name="Greco T."/>
            <person name="Kemp K."/>
            <person name="Kramer J."/>
            <person name="Fulton L."/>
            <person name="Mardis E."/>
            <person name="Dante M."/>
            <person name="Pepin K."/>
            <person name="Hillier L.W."/>
            <person name="Nelson J."/>
            <person name="Spieth J."/>
            <person name="Ryan E."/>
            <person name="Andrews S."/>
            <person name="Geisel C."/>
            <person name="Layman D."/>
            <person name="Du H."/>
            <person name="Ali J."/>
            <person name="Berghoff A."/>
            <person name="Jones K."/>
            <person name="Drone K."/>
            <person name="Cotton M."/>
            <person name="Joshu C."/>
            <person name="Antonoiu B."/>
            <person name="Zidanic M."/>
            <person name="Strong C."/>
            <person name="Sun H."/>
            <person name="Lamar B."/>
            <person name="Yordan C."/>
            <person name="Ma P."/>
            <person name="Zhong J."/>
            <person name="Preston R."/>
            <person name="Vil D."/>
            <person name="Shekher M."/>
            <person name="Matero A."/>
            <person name="Shah R."/>
            <person name="Swaby I.K."/>
            <person name="O'Shaughnessy A."/>
            <person name="Rodriguez M."/>
            <person name="Hoffman J."/>
            <person name="Till S."/>
            <person name="Granat S."/>
            <person name="Shohdy N."/>
            <person name="Hasegawa A."/>
            <person name="Hameed A."/>
            <person name="Lodhi M."/>
            <person name="Johnson A."/>
            <person name="Chen E."/>
            <person name="Marra M.A."/>
            <person name="Martienssen R."/>
            <person name="McCombie W.R."/>
        </authorList>
    </citation>
    <scope>NUCLEOTIDE SEQUENCE [LARGE SCALE GENOMIC DNA]</scope>
    <source>
        <strain>cv. Columbia</strain>
    </source>
</reference>
<reference key="2">
    <citation type="journal article" date="2017" name="Plant J.">
        <title>Araport11: a complete reannotation of the Arabidopsis thaliana reference genome.</title>
        <authorList>
            <person name="Cheng C.Y."/>
            <person name="Krishnakumar V."/>
            <person name="Chan A.P."/>
            <person name="Thibaud-Nissen F."/>
            <person name="Schobel S."/>
            <person name="Town C.D."/>
        </authorList>
    </citation>
    <scope>GENOME REANNOTATION</scope>
    <source>
        <strain>cv. Columbia</strain>
    </source>
</reference>
<reference key="3">
    <citation type="submission" date="2004-07" db="EMBL/GenBank/DDBJ databases">
        <title>Arabidopsis ORF clones.</title>
        <authorList>
            <person name="Shinn P."/>
            <person name="Chen H."/>
            <person name="Cheuk R."/>
            <person name="Kim C.J."/>
            <person name="Ecker J.R."/>
        </authorList>
    </citation>
    <scope>NUCLEOTIDE SEQUENCE [LARGE SCALE MRNA]</scope>
    <source>
        <strain>cv. Columbia</strain>
    </source>
</reference>
<reference key="4">
    <citation type="journal article" date="2013" name="Plant Cell">
        <title>The TIE1 transcriptional repressor links TCP transcription factors with TOPLESS/TOPLESS-RELATED corepressors and modulates leaf development in Arabidopsis.</title>
        <authorList>
            <person name="Tao Q."/>
            <person name="Guo D."/>
            <person name="Wei B."/>
            <person name="Zhang F."/>
            <person name="Pang C."/>
            <person name="Jiang H."/>
            <person name="Zhang J."/>
            <person name="Wei T."/>
            <person name="Gu H."/>
            <person name="Qu L.J."/>
            <person name="Qin G."/>
        </authorList>
    </citation>
    <scope>FUNCTION</scope>
    <scope>SUBCELLULAR LOCATION</scope>
    <scope>MUTAGENESIS OF LEU-189; LEU-191 AND LEU-193</scope>
    <scope>DOMAIN</scope>
    <scope>GENE FAMILY</scope>
    <scope>NOMENCLATURE</scope>
    <scope>INTERACTION WITH TPL; TPR1; TPR2; TPR3; TPR4; TCP2; TCP3; TCP4; TCP5; TCP10; TCP13; TCP17 AND TCP24</scope>
    <scope>TISSUE SPECIFICITY</scope>
    <scope>DISRUPTION PHENOTYPE</scope>
</reference>
<reference key="5">
    <citation type="journal article" date="2014" name="J. Genet. Genomics">
        <title>SPOROCYTELESS is a novel embryophyte-specific transcription repressor that interacts with TPL and TCP proteins in Arabidopsis.</title>
        <authorList>
            <person name="Chen G.H."/>
            <person name="Sun J.Y."/>
            <person name="Liu M."/>
            <person name="Liu J."/>
            <person name="Yang W.C."/>
        </authorList>
    </citation>
    <scope>GENE FAMILY</scope>
    <scope>NOMENCLATURE</scope>
    <scope>INTERACTION WITH SPL AND SPEAR2</scope>
</reference>
<comment type="function">
    <text evidence="2">Transcriptional regulator of leaf development. Acts as an adapter-like transcriptional repressor recruiting TPL/TPR corepressors to inhibit the CIN-like TCP transcription factors (PubMed:23444332).</text>
</comment>
<comment type="subunit">
    <text evidence="2 3">Interacts with TPL and the TPR corepressors TPR1, TPR2, TPR3, TPR4, and with the TCP transcription factors TCP2, TCP3, TCP4, TCP5, TCP10, TCP13, TCP17 and TCP24 (PubMed:23444332). Interacts with SPL and SPEAR2 (PubMed:25527103).</text>
</comment>
<comment type="subcellular location">
    <subcellularLocation>
        <location evidence="2">Nucleus</location>
    </subcellularLocation>
</comment>
<comment type="tissue specificity">
    <text evidence="2">Expressed in shoot apical meristem, cotyledons and leaves. Detected at the leaf margins and in the vascular bundles at the base of the leaves.</text>
</comment>
<comment type="domain">
    <text evidence="2">Contains 1 EAR motif required for the interaction with TPL and TPRs.</text>
</comment>
<comment type="disruption phenotype">
    <text evidence="2">No visible phenotype, due to the redundancy with SPEAR2/TIE4 and SPEAR4/TIE3.</text>
</comment>
<comment type="miscellaneous">
    <text evidence="2">Knock down expression of SPEAR2/TIE4 and SPEAR4/TIE3 by RNAi in a SPEAR3/TIE1 null mutant produces lines displaying epinastic leaves.</text>
</comment>
<comment type="sequence caution" evidence="6">
    <conflict type="erroneous gene model prediction">
        <sequence resource="EMBL-CDS" id="CAA22968"/>
    </conflict>
</comment>
<comment type="sequence caution" evidence="6">
    <conflict type="erroneous gene model prediction">
        <sequence resource="EMBL-CDS" id="CAB81472"/>
    </conflict>
</comment>
<protein>
    <recommendedName>
        <fullName evidence="5">Protein SPEAR3</fullName>
    </recommendedName>
    <alternativeName>
        <fullName evidence="5">SPL-like, EAR-containing protein 3</fullName>
    </alternativeName>
    <alternativeName>
        <fullName evidence="4">TCP interactor containing EAR motif protein 1</fullName>
    </alternativeName>
</protein>